<comment type="cofactor">
    <cofactor evidence="1">
        <name>[4Fe-4S] cluster</name>
        <dbReference type="ChEBI" id="CHEBI:49883"/>
    </cofactor>
    <text evidence="1">Binds 2 [4Fe-4S] clusters.</text>
</comment>
<comment type="subunit">
    <text>Heterotetramer of one alpha, one beta, one delta and one gamma chain.</text>
</comment>
<protein>
    <recommendedName>
        <fullName>Pyruvate synthase subunit PorD</fullName>
    </recommendedName>
    <alternativeName>
        <fullName>Pyruvate oxidoreductase delta chain</fullName>
        <shortName>POR</shortName>
    </alternativeName>
    <alternativeName>
        <fullName>Pyruvic-ferredoxin oxidoreductase subunit delta</fullName>
    </alternativeName>
</protein>
<evidence type="ECO:0000250" key="1">
    <source>
        <dbReference type="UniProtKB" id="P94692"/>
    </source>
</evidence>
<evidence type="ECO:0000255" key="2">
    <source>
        <dbReference type="PROSITE-ProRule" id="PRU00711"/>
    </source>
</evidence>
<evidence type="ECO:0000269" key="3">
    <source>
    </source>
</evidence>
<gene>
    <name type="primary">porD</name>
    <name type="ordered locus">PF0967</name>
</gene>
<keyword id="KW-0004">4Fe-4S</keyword>
<keyword id="KW-0903">Direct protein sequencing</keyword>
<keyword id="KW-0249">Electron transport</keyword>
<keyword id="KW-0408">Iron</keyword>
<keyword id="KW-0411">Iron-sulfur</keyword>
<keyword id="KW-0479">Metal-binding</keyword>
<keyword id="KW-1185">Reference proteome</keyword>
<keyword id="KW-0677">Repeat</keyword>
<keyword id="KW-0813">Transport</keyword>
<feature type="initiator methionine" description="Removed" evidence="3">
    <location>
        <position position="1"/>
    </location>
</feature>
<feature type="chain" id="PRO_0000099922" description="Pyruvate synthase subunit PorD">
    <location>
        <begin position="2"/>
        <end position="105"/>
    </location>
</feature>
<feature type="domain" description="4Fe-4S ferredoxin-type 1" evidence="2">
    <location>
        <begin position="44"/>
        <end position="73"/>
    </location>
</feature>
<feature type="domain" description="4Fe-4S ferredoxin-type 2" evidence="2">
    <location>
        <begin position="74"/>
        <end position="103"/>
    </location>
</feature>
<feature type="binding site" evidence="1">
    <location>
        <position position="53"/>
    </location>
    <ligand>
        <name>[4Fe-4S] cluster</name>
        <dbReference type="ChEBI" id="CHEBI:49883"/>
        <label>1</label>
    </ligand>
</feature>
<feature type="binding site" evidence="1">
    <location>
        <position position="56"/>
    </location>
    <ligand>
        <name>[4Fe-4S] cluster</name>
        <dbReference type="ChEBI" id="CHEBI:49883"/>
        <label>1</label>
    </ligand>
</feature>
<feature type="binding site" evidence="1">
    <location>
        <position position="59"/>
    </location>
    <ligand>
        <name>[4Fe-4S] cluster</name>
        <dbReference type="ChEBI" id="CHEBI:49883"/>
        <label>1</label>
    </ligand>
</feature>
<feature type="binding site" evidence="1">
    <location>
        <position position="63"/>
    </location>
    <ligand>
        <name>[4Fe-4S] cluster</name>
        <dbReference type="ChEBI" id="CHEBI:49883"/>
        <label>2</label>
    </ligand>
</feature>
<feature type="binding site" evidence="1">
    <location>
        <position position="83"/>
    </location>
    <ligand>
        <name>[4Fe-4S] cluster</name>
        <dbReference type="ChEBI" id="CHEBI:49883"/>
        <label>2</label>
    </ligand>
</feature>
<feature type="binding site" evidence="1">
    <location>
        <position position="86"/>
    </location>
    <ligand>
        <name>[4Fe-4S] cluster</name>
        <dbReference type="ChEBI" id="CHEBI:49883"/>
        <label>2</label>
    </ligand>
</feature>
<feature type="binding site" evidence="1">
    <location>
        <position position="89"/>
    </location>
    <ligand>
        <name>[4Fe-4S] cluster</name>
        <dbReference type="ChEBI" id="CHEBI:49883"/>
        <label>2</label>
    </ligand>
</feature>
<feature type="binding site" evidence="1">
    <location>
        <position position="93"/>
    </location>
    <ligand>
        <name>[4Fe-4S] cluster</name>
        <dbReference type="ChEBI" id="CHEBI:49883"/>
        <label>1</label>
    </ligand>
</feature>
<dbReference type="EMBL" id="X85250">
    <property type="protein sequence ID" value="CAA59504.1"/>
    <property type="molecule type" value="Genomic_DNA"/>
</dbReference>
<dbReference type="EMBL" id="AE009950">
    <property type="protein sequence ID" value="AAL81091.1"/>
    <property type="molecule type" value="Genomic_DNA"/>
</dbReference>
<dbReference type="PIR" id="T45087">
    <property type="entry name" value="T45087"/>
</dbReference>
<dbReference type="RefSeq" id="WP_011012104.1">
    <property type="nucleotide sequence ID" value="NZ_CP023154.1"/>
</dbReference>
<dbReference type="SMR" id="Q51803"/>
<dbReference type="STRING" id="186497.PF0967"/>
<dbReference type="PaxDb" id="186497-PF0967"/>
<dbReference type="GeneID" id="41712779"/>
<dbReference type="KEGG" id="pfu:PF0967"/>
<dbReference type="PATRIC" id="fig|186497.12.peg.1026"/>
<dbReference type="eggNOG" id="arCOG01605">
    <property type="taxonomic scope" value="Archaea"/>
</dbReference>
<dbReference type="HOGENOM" id="CLU_139698_1_1_2"/>
<dbReference type="OrthoDB" id="23478at2157"/>
<dbReference type="PhylomeDB" id="Q51803"/>
<dbReference type="BRENDA" id="1.2.7.1">
    <property type="organism ID" value="5243"/>
</dbReference>
<dbReference type="Proteomes" id="UP000001013">
    <property type="component" value="Chromosome"/>
</dbReference>
<dbReference type="GO" id="GO:0051539">
    <property type="term" value="F:4 iron, 4 sulfur cluster binding"/>
    <property type="evidence" value="ECO:0007669"/>
    <property type="project" value="UniProtKB-KW"/>
</dbReference>
<dbReference type="GO" id="GO:0046872">
    <property type="term" value="F:metal ion binding"/>
    <property type="evidence" value="ECO:0007669"/>
    <property type="project" value="UniProtKB-KW"/>
</dbReference>
<dbReference type="GO" id="GO:0016625">
    <property type="term" value="F:oxidoreductase activity, acting on the aldehyde or oxo group of donors, iron-sulfur protein as acceptor"/>
    <property type="evidence" value="ECO:0007669"/>
    <property type="project" value="InterPro"/>
</dbReference>
<dbReference type="Gene3D" id="3.30.70.20">
    <property type="match status" value="1"/>
</dbReference>
<dbReference type="InterPro" id="IPR017896">
    <property type="entry name" value="4Fe4S_Fe-S-bd"/>
</dbReference>
<dbReference type="InterPro" id="IPR017900">
    <property type="entry name" value="4Fe4S_Fe_S_CS"/>
</dbReference>
<dbReference type="InterPro" id="IPR011898">
    <property type="entry name" value="PorD_KorD"/>
</dbReference>
<dbReference type="InterPro" id="IPR053389">
    <property type="entry name" value="Pyruvate_synthase_PorD"/>
</dbReference>
<dbReference type="NCBIfam" id="NF040684">
    <property type="entry name" value="PorD_Arch"/>
    <property type="match status" value="1"/>
</dbReference>
<dbReference type="NCBIfam" id="TIGR02179">
    <property type="entry name" value="PorD_KorD"/>
    <property type="match status" value="1"/>
</dbReference>
<dbReference type="NCBIfam" id="NF007203">
    <property type="entry name" value="PRK09624.1"/>
    <property type="match status" value="1"/>
</dbReference>
<dbReference type="PANTHER" id="PTHR43724">
    <property type="entry name" value="PYRUVATE SYNTHASE SUBUNIT PORD"/>
    <property type="match status" value="1"/>
</dbReference>
<dbReference type="PANTHER" id="PTHR43724:SF2">
    <property type="entry name" value="PYRUVATE SYNTHASE SUBUNIT PORD"/>
    <property type="match status" value="1"/>
</dbReference>
<dbReference type="Pfam" id="PF14697">
    <property type="entry name" value="Fer4_21"/>
    <property type="match status" value="1"/>
</dbReference>
<dbReference type="SUPFAM" id="SSF54862">
    <property type="entry name" value="4Fe-4S ferredoxins"/>
    <property type="match status" value="1"/>
</dbReference>
<dbReference type="PROSITE" id="PS00198">
    <property type="entry name" value="4FE4S_FER_1"/>
    <property type="match status" value="2"/>
</dbReference>
<dbReference type="PROSITE" id="PS51379">
    <property type="entry name" value="4FE4S_FER_2"/>
    <property type="match status" value="2"/>
</dbReference>
<reference key="1">
    <citation type="journal article" date="1996" name="J. Bacteriol.">
        <title>Molecular and phylogenetic characterization of pyruvate and 2-ketoisovalerate ferredoxin oxidoreductases from Pyrococcus furiosus and pyruvate ferredoxin oxidoreductase from Thermotoga maritima.</title>
        <authorList>
            <person name="Kletzin A."/>
            <person name="Adams M.W.W."/>
        </authorList>
    </citation>
    <scope>NUCLEOTIDE SEQUENCE [GENOMIC DNA]</scope>
    <scope>PROTEIN SEQUENCE OF 2-18</scope>
    <source>
        <strain>ATCC 43587 / DSM 3638 / JCM 8422 / Vc1</strain>
    </source>
</reference>
<reference key="2">
    <citation type="journal article" date="1999" name="Genetics">
        <title>Divergence of the hyperthermophilic archaea Pyrococcus furiosus and P. horikoshii inferred from complete genomic sequences.</title>
        <authorList>
            <person name="Maeder D.L."/>
            <person name="Weiss R.B."/>
            <person name="Dunn D.M."/>
            <person name="Cherry J.L."/>
            <person name="Gonzalez J.M."/>
            <person name="DiRuggiero J."/>
            <person name="Robb F.T."/>
        </authorList>
    </citation>
    <scope>NUCLEOTIDE SEQUENCE [LARGE SCALE GENOMIC DNA]</scope>
    <source>
        <strain>ATCC 43587 / DSM 3638 / JCM 8422 / Vc1</strain>
    </source>
</reference>
<organism>
    <name type="scientific">Pyrococcus furiosus (strain ATCC 43587 / DSM 3638 / JCM 8422 / Vc1)</name>
    <dbReference type="NCBI Taxonomy" id="186497"/>
    <lineage>
        <taxon>Archaea</taxon>
        <taxon>Methanobacteriati</taxon>
        <taxon>Methanobacteriota</taxon>
        <taxon>Thermococci</taxon>
        <taxon>Thermococcales</taxon>
        <taxon>Thermococcaceae</taxon>
        <taxon>Pyrococcus</taxon>
    </lineage>
</organism>
<name>PORD_PYRFU</name>
<sequence>MAESPFKADIERAQKELSEKMTPGAIVYIPGSSVINKTGSWRVFKPEFNRDKCVRCYLCYIYCPEPAIYLDEEGYPVFDYDYCKGCGICANECPTKAIEMVREVK</sequence>
<accession>Q51803</accession>
<proteinExistence type="evidence at protein level"/>